<gene>
    <name evidence="1" type="primary">nhaB</name>
    <name type="ordered locus">Shal_1841</name>
</gene>
<comment type="function">
    <text evidence="1">Na(+)/H(+) antiporter that extrudes sodium in exchange for external protons.</text>
</comment>
<comment type="catalytic activity">
    <reaction evidence="1">
        <text>2 Na(+)(in) + 3 H(+)(out) = 2 Na(+)(out) + 3 H(+)(in)</text>
        <dbReference type="Rhea" id="RHEA:29247"/>
        <dbReference type="ChEBI" id="CHEBI:15378"/>
        <dbReference type="ChEBI" id="CHEBI:29101"/>
    </reaction>
    <physiologicalReaction direction="left-to-right" evidence="1">
        <dbReference type="Rhea" id="RHEA:29248"/>
    </physiologicalReaction>
</comment>
<comment type="subcellular location">
    <subcellularLocation>
        <location evidence="1">Cell inner membrane</location>
        <topology evidence="1">Multi-pass membrane protein</topology>
    </subcellularLocation>
</comment>
<comment type="similarity">
    <text evidence="1">Belongs to the NhaB Na(+)/H(+) (TC 2.A.34) antiporter family.</text>
</comment>
<organism>
    <name type="scientific">Shewanella halifaxensis (strain HAW-EB4)</name>
    <dbReference type="NCBI Taxonomy" id="458817"/>
    <lineage>
        <taxon>Bacteria</taxon>
        <taxon>Pseudomonadati</taxon>
        <taxon>Pseudomonadota</taxon>
        <taxon>Gammaproteobacteria</taxon>
        <taxon>Alteromonadales</taxon>
        <taxon>Shewanellaceae</taxon>
        <taxon>Shewanella</taxon>
    </lineage>
</organism>
<dbReference type="EMBL" id="CP000931">
    <property type="protein sequence ID" value="ABZ76406.1"/>
    <property type="molecule type" value="Genomic_DNA"/>
</dbReference>
<dbReference type="RefSeq" id="WP_012276938.1">
    <property type="nucleotide sequence ID" value="NC_010334.1"/>
</dbReference>
<dbReference type="SMR" id="B0TRI8"/>
<dbReference type="STRING" id="458817.Shal_1841"/>
<dbReference type="KEGG" id="shl:Shal_1841"/>
<dbReference type="eggNOG" id="COG3067">
    <property type="taxonomic scope" value="Bacteria"/>
</dbReference>
<dbReference type="HOGENOM" id="CLU_041110_0_0_6"/>
<dbReference type="OrthoDB" id="5288732at2"/>
<dbReference type="Proteomes" id="UP000001317">
    <property type="component" value="Chromosome"/>
</dbReference>
<dbReference type="GO" id="GO:0005886">
    <property type="term" value="C:plasma membrane"/>
    <property type="evidence" value="ECO:0007669"/>
    <property type="project" value="UniProtKB-SubCell"/>
</dbReference>
<dbReference type="GO" id="GO:0015385">
    <property type="term" value="F:sodium:proton antiporter activity"/>
    <property type="evidence" value="ECO:0007669"/>
    <property type="project" value="InterPro"/>
</dbReference>
<dbReference type="HAMAP" id="MF_01599">
    <property type="entry name" value="NhaB"/>
    <property type="match status" value="1"/>
</dbReference>
<dbReference type="InterPro" id="IPR004671">
    <property type="entry name" value="Na+/H+_antiporter_NhaB"/>
</dbReference>
<dbReference type="NCBIfam" id="TIGR00774">
    <property type="entry name" value="NhaB"/>
    <property type="match status" value="1"/>
</dbReference>
<dbReference type="NCBIfam" id="NF007093">
    <property type="entry name" value="PRK09547.1"/>
    <property type="match status" value="1"/>
</dbReference>
<dbReference type="PANTHER" id="PTHR43302:SF1">
    <property type="entry name" value="NA(+)_H(+) ANTIPORTER NHAB"/>
    <property type="match status" value="1"/>
</dbReference>
<dbReference type="PANTHER" id="PTHR43302">
    <property type="entry name" value="TRANSPORTER ARSB-RELATED"/>
    <property type="match status" value="1"/>
</dbReference>
<dbReference type="Pfam" id="PF06450">
    <property type="entry name" value="NhaB"/>
    <property type="match status" value="1"/>
</dbReference>
<proteinExistence type="inferred from homology"/>
<sequence>MPVTMSRAILDNFLGNSPKWFKLAIISFLVINPIVFYFNPFIAGWLLVVEFIFTLAMALKCYPLQPGGLLAIEAVAIGMTSPSQVLHEIEANLEVVLLLVFMVAGIYFMKQLLLFVFTKMITKVRSKVYVSLLFCVSSAFLSAFLDALTVIAVIITVAVGFYSIYHRVASGKSFADSHDHTSDGHPQLCEEELESFRGFLRNLLMHAGVGTALGGVCTMVGEPQNLIIAAQANWQFAEFAIRMSPVTVPVFFAGVTTCFLVEKFKVFGYGQQLPEAVHKILSDYDAHEDANRTKHDKVKLLVQAFIGVWLIAGLALHLASVGLIGLSVIILATAFNGITNEHALGKAFEEALPFTALLAVFFAIVAVIIDLQLFAPVIQWALSYEGNTQLVVFYIANGLLSMVSDNVFVGTVYINEVKAALLNGQITRDQFDLLAVAINTGTNLPSVATPNGQAAFLFLLTSAIAPLIRLSYGRMVWMALPYTIVLSIVGVLAIQLGALEQMTQYFYDTQLLIHHSAQAVTDSVVSGH</sequence>
<name>NHAB_SHEHH</name>
<feature type="chain" id="PRO_0000333129" description="Na(+)/H(+) antiporter NhaB">
    <location>
        <begin position="1"/>
        <end position="528"/>
    </location>
</feature>
<feature type="transmembrane region" description="Helical" evidence="1">
    <location>
        <begin position="25"/>
        <end position="47"/>
    </location>
</feature>
<feature type="transmembrane region" description="Helical" evidence="1">
    <location>
        <begin position="66"/>
        <end position="86"/>
    </location>
</feature>
<feature type="transmembrane region" description="Helical" evidence="1">
    <location>
        <begin position="97"/>
        <end position="117"/>
    </location>
</feature>
<feature type="transmembrane region" description="Helical" evidence="1">
    <location>
        <begin position="130"/>
        <end position="164"/>
    </location>
</feature>
<feature type="transmembrane region" description="Helical" evidence="1">
    <location>
        <begin position="241"/>
        <end position="261"/>
    </location>
</feature>
<feature type="transmembrane region" description="Helical" evidence="1">
    <location>
        <begin position="304"/>
        <end position="324"/>
    </location>
</feature>
<feature type="transmembrane region" description="Helical" evidence="1">
    <location>
        <begin position="351"/>
        <end position="371"/>
    </location>
</feature>
<feature type="transmembrane region" description="Helical" evidence="1">
    <location>
        <begin position="390"/>
        <end position="410"/>
    </location>
</feature>
<feature type="transmembrane region" description="Helical" evidence="1">
    <location>
        <begin position="448"/>
        <end position="468"/>
    </location>
</feature>
<feature type="transmembrane region" description="Helical" evidence="1">
    <location>
        <begin position="476"/>
        <end position="496"/>
    </location>
</feature>
<reference key="1">
    <citation type="submission" date="2008-01" db="EMBL/GenBank/DDBJ databases">
        <title>Complete sequence of Shewanella halifaxensis HAW-EB4.</title>
        <authorList>
            <consortium name="US DOE Joint Genome Institute"/>
            <person name="Copeland A."/>
            <person name="Lucas S."/>
            <person name="Lapidus A."/>
            <person name="Glavina del Rio T."/>
            <person name="Dalin E."/>
            <person name="Tice H."/>
            <person name="Bruce D."/>
            <person name="Goodwin L."/>
            <person name="Pitluck S."/>
            <person name="Sims D."/>
            <person name="Brettin T."/>
            <person name="Detter J.C."/>
            <person name="Han C."/>
            <person name="Kuske C.R."/>
            <person name="Schmutz J."/>
            <person name="Larimer F."/>
            <person name="Land M."/>
            <person name="Hauser L."/>
            <person name="Kyrpides N."/>
            <person name="Kim E."/>
            <person name="Zhao J.-S."/>
            <person name="Richardson P."/>
        </authorList>
    </citation>
    <scope>NUCLEOTIDE SEQUENCE [LARGE SCALE GENOMIC DNA]</scope>
    <source>
        <strain>HAW-EB4</strain>
    </source>
</reference>
<accession>B0TRI8</accession>
<evidence type="ECO:0000255" key="1">
    <source>
        <dbReference type="HAMAP-Rule" id="MF_01599"/>
    </source>
</evidence>
<keyword id="KW-0050">Antiport</keyword>
<keyword id="KW-0997">Cell inner membrane</keyword>
<keyword id="KW-1003">Cell membrane</keyword>
<keyword id="KW-0406">Ion transport</keyword>
<keyword id="KW-0472">Membrane</keyword>
<keyword id="KW-0915">Sodium</keyword>
<keyword id="KW-0739">Sodium transport</keyword>
<keyword id="KW-0812">Transmembrane</keyword>
<keyword id="KW-1133">Transmembrane helix</keyword>
<keyword id="KW-0813">Transport</keyword>
<protein>
    <recommendedName>
        <fullName evidence="1">Na(+)/H(+) antiporter NhaB</fullName>
    </recommendedName>
    <alternativeName>
        <fullName evidence="1">Sodium/proton antiporter NhaB</fullName>
    </alternativeName>
</protein>